<keyword id="KW-0963">Cytoplasm</keyword>
<keyword id="KW-0378">Hydrolase</keyword>
<keyword id="KW-0546">Nucleotide metabolism</keyword>
<proteinExistence type="inferred from homology"/>
<feature type="chain" id="PRO_0000122978" description="7-methyl-GTP pyrophosphatase">
    <location>
        <begin position="1"/>
        <end position="194"/>
    </location>
</feature>
<feature type="active site" description="Proton acceptor" evidence="1">
    <location>
        <position position="69"/>
    </location>
</feature>
<feature type="site" description="Important for substrate specificity" evidence="1">
    <location>
        <position position="12"/>
    </location>
</feature>
<feature type="site" description="Important for substrate specificity" evidence="1">
    <location>
        <position position="70"/>
    </location>
</feature>
<feature type="site" description="Important for substrate specificity" evidence="1">
    <location>
        <position position="154"/>
    </location>
</feature>
<reference key="1">
    <citation type="journal article" date="2001" name="Nature">
        <title>Complete genome sequence of a multiple drug resistant Salmonella enterica serovar Typhi CT18.</title>
        <authorList>
            <person name="Parkhill J."/>
            <person name="Dougan G."/>
            <person name="James K.D."/>
            <person name="Thomson N.R."/>
            <person name="Pickard D."/>
            <person name="Wain J."/>
            <person name="Churcher C.M."/>
            <person name="Mungall K.L."/>
            <person name="Bentley S.D."/>
            <person name="Holden M.T.G."/>
            <person name="Sebaihia M."/>
            <person name="Baker S."/>
            <person name="Basham D."/>
            <person name="Brooks K."/>
            <person name="Chillingworth T."/>
            <person name="Connerton P."/>
            <person name="Cronin A."/>
            <person name="Davis P."/>
            <person name="Davies R.M."/>
            <person name="Dowd L."/>
            <person name="White N."/>
            <person name="Farrar J."/>
            <person name="Feltwell T."/>
            <person name="Hamlin N."/>
            <person name="Haque A."/>
            <person name="Hien T.T."/>
            <person name="Holroyd S."/>
            <person name="Jagels K."/>
            <person name="Krogh A."/>
            <person name="Larsen T.S."/>
            <person name="Leather S."/>
            <person name="Moule S."/>
            <person name="O'Gaora P."/>
            <person name="Parry C."/>
            <person name="Quail M.A."/>
            <person name="Rutherford K.M."/>
            <person name="Simmonds M."/>
            <person name="Skelton J."/>
            <person name="Stevens K."/>
            <person name="Whitehead S."/>
            <person name="Barrell B.G."/>
        </authorList>
    </citation>
    <scope>NUCLEOTIDE SEQUENCE [LARGE SCALE GENOMIC DNA]</scope>
    <source>
        <strain>CT18</strain>
    </source>
</reference>
<reference key="2">
    <citation type="journal article" date="2003" name="J. Bacteriol.">
        <title>Comparative genomics of Salmonella enterica serovar Typhi strains Ty2 and CT18.</title>
        <authorList>
            <person name="Deng W."/>
            <person name="Liou S.-R."/>
            <person name="Plunkett G. III"/>
            <person name="Mayhew G.F."/>
            <person name="Rose D.J."/>
            <person name="Burland V."/>
            <person name="Kodoyianni V."/>
            <person name="Schwartz D.C."/>
            <person name="Blattner F.R."/>
        </authorList>
    </citation>
    <scope>NUCLEOTIDE SEQUENCE [LARGE SCALE GENOMIC DNA]</scope>
    <source>
        <strain>ATCC 700931 / Ty2</strain>
    </source>
</reference>
<sequence length="194" mass="21451">MPRLILASTSPWRRALLEKLTIPFECAAPDVDETPMPGEAPRQLVLRLAQAKAQSLAARFPNHLIIGSDQICVLDGEITGKPLTEEKARQQLAKASGSIVTFYTGLALYNSASGHLQTEVEPFDVHFRHLSEAEIDDYVRKEHPLHCAGSFKSEGLGIALFERLEGRDPNTLIGLPLIALCQMLRREEMNPLNA</sequence>
<dbReference type="EC" id="3.6.1.-" evidence="1"/>
<dbReference type="EMBL" id="AL513382">
    <property type="protein sequence ID" value="CAD08313.1"/>
    <property type="molecule type" value="Genomic_DNA"/>
</dbReference>
<dbReference type="EMBL" id="AE014613">
    <property type="protein sequence ID" value="AAO69355.1"/>
    <property type="molecule type" value="Genomic_DNA"/>
</dbReference>
<dbReference type="RefSeq" id="NP_455682.1">
    <property type="nucleotide sequence ID" value="NC_003198.1"/>
</dbReference>
<dbReference type="RefSeq" id="WP_001137608.1">
    <property type="nucleotide sequence ID" value="NZ_WSUR01000030.1"/>
</dbReference>
<dbReference type="SMR" id="P58628"/>
<dbReference type="STRING" id="220341.gene:17585193"/>
<dbReference type="KEGG" id="stt:t1731"/>
<dbReference type="KEGG" id="sty:STY1228"/>
<dbReference type="PATRIC" id="fig|220341.7.peg.1230"/>
<dbReference type="eggNOG" id="COG0424">
    <property type="taxonomic scope" value="Bacteria"/>
</dbReference>
<dbReference type="HOGENOM" id="CLU_040416_1_0_6"/>
<dbReference type="OMA" id="FYCAGSF"/>
<dbReference type="OrthoDB" id="9813694at2"/>
<dbReference type="Proteomes" id="UP000000541">
    <property type="component" value="Chromosome"/>
</dbReference>
<dbReference type="Proteomes" id="UP000002670">
    <property type="component" value="Chromosome"/>
</dbReference>
<dbReference type="GO" id="GO:0005737">
    <property type="term" value="C:cytoplasm"/>
    <property type="evidence" value="ECO:0007669"/>
    <property type="project" value="UniProtKB-SubCell"/>
</dbReference>
<dbReference type="GO" id="GO:0047429">
    <property type="term" value="F:nucleoside triphosphate diphosphatase activity"/>
    <property type="evidence" value="ECO:0007669"/>
    <property type="project" value="InterPro"/>
</dbReference>
<dbReference type="GO" id="GO:0009117">
    <property type="term" value="P:nucleotide metabolic process"/>
    <property type="evidence" value="ECO:0007669"/>
    <property type="project" value="UniProtKB-KW"/>
</dbReference>
<dbReference type="CDD" id="cd00555">
    <property type="entry name" value="Maf"/>
    <property type="match status" value="1"/>
</dbReference>
<dbReference type="FunFam" id="3.90.950.10:FF:000005">
    <property type="entry name" value="7-methyl-GTP pyrophosphatase"/>
    <property type="match status" value="1"/>
</dbReference>
<dbReference type="Gene3D" id="3.90.950.10">
    <property type="match status" value="1"/>
</dbReference>
<dbReference type="HAMAP" id="MF_00528">
    <property type="entry name" value="Maf"/>
    <property type="match status" value="1"/>
</dbReference>
<dbReference type="InterPro" id="IPR029001">
    <property type="entry name" value="ITPase-like_fam"/>
</dbReference>
<dbReference type="InterPro" id="IPR003697">
    <property type="entry name" value="Maf-like"/>
</dbReference>
<dbReference type="NCBIfam" id="TIGR00172">
    <property type="entry name" value="maf"/>
    <property type="match status" value="1"/>
</dbReference>
<dbReference type="PANTHER" id="PTHR43213:SF10">
    <property type="entry name" value="7-METHYL-GTP PYROPHOSPHATASE"/>
    <property type="match status" value="1"/>
</dbReference>
<dbReference type="PANTHER" id="PTHR43213">
    <property type="entry name" value="BIFUNCTIONAL DTTP/UTP PYROPHOSPHATASE/METHYLTRANSFERASE PROTEIN-RELATED"/>
    <property type="match status" value="1"/>
</dbReference>
<dbReference type="Pfam" id="PF02545">
    <property type="entry name" value="Maf"/>
    <property type="match status" value="1"/>
</dbReference>
<dbReference type="PIRSF" id="PIRSF006305">
    <property type="entry name" value="Maf"/>
    <property type="match status" value="1"/>
</dbReference>
<dbReference type="SUPFAM" id="SSF52972">
    <property type="entry name" value="ITPase-like"/>
    <property type="match status" value="1"/>
</dbReference>
<accession>P58628</accession>
<protein>
    <recommendedName>
        <fullName evidence="1">7-methyl-GTP pyrophosphatase</fullName>
        <shortName evidence="1">m(7)GTP pyrophosphatase</shortName>
        <ecNumber evidence="1">3.6.1.-</ecNumber>
    </recommendedName>
</protein>
<organism>
    <name type="scientific">Salmonella typhi</name>
    <dbReference type="NCBI Taxonomy" id="90370"/>
    <lineage>
        <taxon>Bacteria</taxon>
        <taxon>Pseudomonadati</taxon>
        <taxon>Pseudomonadota</taxon>
        <taxon>Gammaproteobacteria</taxon>
        <taxon>Enterobacterales</taxon>
        <taxon>Enterobacteriaceae</taxon>
        <taxon>Salmonella</taxon>
    </lineage>
</organism>
<comment type="function">
    <text evidence="1">Nucleoside triphosphate pyrophosphatase that hydrolyzes 7-methyl-GTP (m(7)GTP). May have a dual role in cell division arrest and in preventing the incorporation of modified nucleotides into cellular nucleic acids.</text>
</comment>
<comment type="catalytic activity">
    <reaction evidence="1">
        <text>N(7)-methyl-GTP + H2O = N(7)-methyl-GMP + diphosphate + H(+)</text>
        <dbReference type="Rhea" id="RHEA:58744"/>
        <dbReference type="ChEBI" id="CHEBI:15377"/>
        <dbReference type="ChEBI" id="CHEBI:15378"/>
        <dbReference type="ChEBI" id="CHEBI:33019"/>
        <dbReference type="ChEBI" id="CHEBI:58285"/>
        <dbReference type="ChEBI" id="CHEBI:87133"/>
    </reaction>
</comment>
<comment type="cofactor">
    <cofactor evidence="1">
        <name>a divalent metal cation</name>
        <dbReference type="ChEBI" id="CHEBI:60240"/>
    </cofactor>
</comment>
<comment type="subcellular location">
    <subcellularLocation>
        <location evidence="1 2">Cytoplasm</location>
    </subcellularLocation>
</comment>
<comment type="similarity">
    <text evidence="1">Belongs to the Maf family. YceF subfamily.</text>
</comment>
<gene>
    <name type="primary">yceF</name>
    <name type="ordered locus">STY1228</name>
    <name type="ordered locus">t1731</name>
</gene>
<name>NTPPB_SALTI</name>
<evidence type="ECO:0000255" key="1">
    <source>
        <dbReference type="HAMAP-Rule" id="MF_00528"/>
    </source>
</evidence>
<evidence type="ECO:0000305" key="2"/>